<reference key="1">
    <citation type="journal article" date="1988" name="J. Biol. Chem.">
        <title>Cloning and characterization of a murine band 3-related cDNA from kidney and from a lymphoid cell line.</title>
        <authorList>
            <person name="Alper S.L."/>
            <person name="Kopito R.R."/>
            <person name="Libresco S.M."/>
            <person name="Lodish H.F."/>
        </authorList>
    </citation>
    <scope>NUCLEOTIDE SEQUENCE [MRNA] (ISOFORM A)</scope>
</reference>
<reference key="2">
    <citation type="journal article" date="2000" name="Biochem. Biophys. Res. Commun.">
        <title>Molecular cloning and genomic organization of the mouse AE2 anion exchanger gene.</title>
        <authorList>
            <person name="Lecanda J."/>
            <person name="Urtasun R."/>
            <person name="Medina J.F."/>
        </authorList>
    </citation>
    <scope>NUCLEOTIDE SEQUENCE [GENOMIC DNA]</scope>
    <scope>ALTERNATIVE SPLICING</scope>
    <scope>TISSUE SPECIFICITY (ISOFORMS A; B1; B2; C1 AND C2)</scope>
</reference>
<reference key="3">
    <citation type="journal article" date="1990" name="Proc. Natl. Acad. Sci. U.S.A.">
        <title>Functional expression and subcellular localization of an anion exchanger cloned from choroid plexus.</title>
        <authorList>
            <person name="Lindsey A.E."/>
            <person name="Schneider K."/>
            <person name="Simmons D.M."/>
            <person name="Baron R."/>
            <person name="Lee B.S."/>
            <person name="Kopito R.R."/>
        </authorList>
    </citation>
    <scope>FUNCTION</scope>
    <scope>TRANSPORTER ACTIVITY</scope>
    <scope>ACTIVITY REGULATION</scope>
    <scope>SUBCELLULAR LOCATION</scope>
    <scope>TISSUE SPECIFICITY</scope>
</reference>
<reference key="4">
    <citation type="journal article" date="2003" name="Proc. Natl. Acad. Sci. U.S.A.">
        <title>Anion exchanger 2 is essential for spermiogenesis in mice.</title>
        <authorList>
            <person name="Medina J.F."/>
            <person name="Recalde S."/>
            <person name="Prieto J."/>
            <person name="Lecanda J."/>
            <person name="Saez E."/>
            <person name="Funk C.D."/>
            <person name="Vecino P."/>
            <person name="van Roon M.A."/>
            <person name="Ottenhoff R."/>
            <person name="Bosma P.J."/>
            <person name="Bakker C.T."/>
            <person name="Elferink R.P."/>
        </authorList>
    </citation>
    <scope>FUNCTION (ISOFORMS A; B1 AND B2)</scope>
    <scope>DISRUPTION PHENOTYPE</scope>
    <scope>TISSUE SPECIFICITY (ISOFORMS A; B1 AND B2)</scope>
</reference>
<reference key="5">
    <citation type="journal article" date="2004" name="Am. J. Physiol.">
        <title>Cl(-)/HCO(3)(-) exchange is acetazolamide sensitive and activated by a muscarinic receptor-induced [Ca(2+)](i) increase in salivary acinar cells.</title>
        <authorList>
            <person name="Nguyen H.V."/>
            <person name="Stuart-Tilley A."/>
            <person name="Alper S.L."/>
            <person name="Melvin J.E."/>
        </authorList>
    </citation>
    <scope>FUNCTION</scope>
    <scope>TRANSPORTER ACTIVITY</scope>
    <scope>ACTIVITY REGULATION</scope>
    <scope>SUBCELLULAR LOCATION</scope>
    <scope>TISSUE SPECIFICITY</scope>
</reference>
<reference key="6">
    <citation type="journal article" date="2008" name="Proc. Natl. Acad. Sci. U.S.A.">
        <title>HCO3-/Cl- anion exchanger SLC4A2 is required for proper osteoclast differentiation and function.</title>
        <authorList>
            <person name="Wu J."/>
            <person name="Glimcher L.H."/>
            <person name="Aliprantis A.O."/>
        </authorList>
    </citation>
    <scope>FUNCTION</scope>
    <scope>SUBCELLULAR LOCATION</scope>
    <scope>INDUCTION</scope>
    <scope>DISRUPTION PHENOTYPE</scope>
</reference>
<reference key="7">
    <citation type="journal article" date="2009" name="Immunity">
        <title>The phagosomal proteome in interferon-gamma-activated macrophages.</title>
        <authorList>
            <person name="Trost M."/>
            <person name="English L."/>
            <person name="Lemieux S."/>
            <person name="Courcelles M."/>
            <person name="Desjardins M."/>
            <person name="Thibault P."/>
        </authorList>
    </citation>
    <scope>PHOSPHORYLATION [LARGE SCALE ANALYSIS] AT SER-144; SER-170; SER-172 AND THR-253</scope>
    <scope>IDENTIFICATION BY MASS SPECTROMETRY [LARGE SCALE ANALYSIS]</scope>
</reference>
<reference key="8">
    <citation type="journal article" date="2010" name="Cell">
        <title>A tissue-specific atlas of mouse protein phosphorylation and expression.</title>
        <authorList>
            <person name="Huttlin E.L."/>
            <person name="Jedrychowski M.P."/>
            <person name="Elias J.E."/>
            <person name="Goswami T."/>
            <person name="Rad R."/>
            <person name="Beausoleil S.A."/>
            <person name="Villen J."/>
            <person name="Haas W."/>
            <person name="Sowa M.E."/>
            <person name="Gygi S.P."/>
        </authorList>
    </citation>
    <scope>IDENTIFICATION BY MASS SPECTROMETRY [LARGE SCALE ANALYSIS]</scope>
    <source>
        <tissue>Kidney</tissue>
        <tissue>Lung</tissue>
        <tissue>Spleen</tissue>
        <tissue>Testis</tissue>
    </source>
</reference>
<reference key="9">
    <citation type="journal article" date="2013" name="Proc. Natl. Acad. Sci. U.S.A.">
        <title>SLC4A2-mediated Cl-/HCO3- exchange activity is essential for calpain-dependent regulation of the actin cytoskeleton in osteoclasts.</title>
        <authorList>
            <person name="Coury F."/>
            <person name="Zenger S."/>
            <person name="Stewart A.K."/>
            <person name="Stephens S."/>
            <person name="Neff L."/>
            <person name="Tsang K."/>
            <person name="Shull G.E."/>
            <person name="Alper S.L."/>
            <person name="Baron R."/>
            <person name="Aliprantis A.O."/>
        </authorList>
    </citation>
    <scope>FUNCTION</scope>
    <scope>TRANSPORTER ACTIVITY</scope>
    <scope>SUBCELLULAR LOCATION</scope>
    <scope>DISRUPTION PHENOTYPE</scope>
    <scope>MUTAGENESIS OF ARG-1056</scope>
</reference>
<reference key="10">
    <citation type="journal article" date="2014" name="Eur. J. Immunol.">
        <title>Anion exchanger 2 is critical for CD8(+) T cells to maintain pHi homeostasis and modulate immune responses.</title>
        <authorList>
            <person name="Concepcion A.R."/>
            <person name="Salas J.T."/>
            <person name="Sarvide S."/>
            <person name="Saez E."/>
            <person name="Ferrer A."/>
            <person name="Lopez M."/>
            <person name="Portu A."/>
            <person name="Banales J.M."/>
            <person name="Hervas-Stubbs S."/>
            <person name="Oude Elferink R.P."/>
            <person name="Prieto J."/>
            <person name="Medina J.F."/>
        </authorList>
    </citation>
    <scope>FUNCTION</scope>
    <scope>TRANSPORTER ACTIVITY</scope>
    <scope>DISRUPTION PHENOTYPE</scope>
</reference>
<dbReference type="EMBL" id="J04036">
    <property type="protein sequence ID" value="AAA65505.1"/>
    <property type="molecule type" value="mRNA"/>
</dbReference>
<dbReference type="EMBL" id="AF255774">
    <property type="protein sequence ID" value="AAG23154.1"/>
    <property type="molecule type" value="Genomic_DNA"/>
</dbReference>
<dbReference type="EMBL" id="AF255774">
    <property type="protein sequence ID" value="AAG23155.1"/>
    <property type="molecule type" value="Genomic_DNA"/>
</dbReference>
<dbReference type="EMBL" id="AF255774">
    <property type="protein sequence ID" value="AAG23156.1"/>
    <property type="molecule type" value="Genomic_DNA"/>
</dbReference>
<dbReference type="EMBL" id="AF255774">
    <property type="protein sequence ID" value="AAG23158.1"/>
    <property type="molecule type" value="Genomic_DNA"/>
</dbReference>
<dbReference type="EMBL" id="AF255774">
    <property type="protein sequence ID" value="AAG23157.1"/>
    <property type="molecule type" value="Genomic_DNA"/>
</dbReference>
<dbReference type="CCDS" id="CCDS19119.1">
    <molecule id="P13808-1"/>
</dbReference>
<dbReference type="PIR" id="A31789">
    <property type="entry name" value="A31789"/>
</dbReference>
<dbReference type="RefSeq" id="NP_001240821.1">
    <property type="nucleotide sequence ID" value="NM_001253892.1"/>
</dbReference>
<dbReference type="RefSeq" id="NP_033233.2">
    <property type="nucleotide sequence ID" value="NM_009207.3"/>
</dbReference>
<dbReference type="RefSeq" id="XP_006535713.1">
    <property type="nucleotide sequence ID" value="XM_006535650.1"/>
</dbReference>
<dbReference type="RefSeq" id="XP_006535714.1">
    <property type="nucleotide sequence ID" value="XM_006535651.3"/>
</dbReference>
<dbReference type="RefSeq" id="XP_006535718.1">
    <property type="nucleotide sequence ID" value="XM_006535655.3"/>
</dbReference>
<dbReference type="RefSeq" id="XP_006535719.1">
    <property type="nucleotide sequence ID" value="XM_006535656.3"/>
</dbReference>
<dbReference type="SMR" id="P13808"/>
<dbReference type="BioGRID" id="203314">
    <property type="interactions" value="7"/>
</dbReference>
<dbReference type="FunCoup" id="P13808">
    <property type="interactions" value="558"/>
</dbReference>
<dbReference type="STRING" id="10090.ENSMUSP00000078972"/>
<dbReference type="GlyCosmos" id="P13808">
    <property type="glycosylation" value="3 sites, No reported glycans"/>
</dbReference>
<dbReference type="GlyGen" id="P13808">
    <property type="glycosylation" value="5 sites"/>
</dbReference>
<dbReference type="iPTMnet" id="P13808"/>
<dbReference type="PhosphoSitePlus" id="P13808"/>
<dbReference type="jPOST" id="P13808"/>
<dbReference type="PaxDb" id="10090-ENSMUSP00000078972"/>
<dbReference type="PeptideAtlas" id="P13808"/>
<dbReference type="ProteomicsDB" id="273516">
    <molecule id="P13808-1"/>
</dbReference>
<dbReference type="ProteomicsDB" id="273517">
    <molecule id="P13808-2"/>
</dbReference>
<dbReference type="ProteomicsDB" id="273518">
    <molecule id="P13808-3"/>
</dbReference>
<dbReference type="ProteomicsDB" id="273519">
    <molecule id="P13808-4"/>
</dbReference>
<dbReference type="ProteomicsDB" id="273520">
    <molecule id="P13808-5"/>
</dbReference>
<dbReference type="Pumba" id="P13808"/>
<dbReference type="DNASU" id="20535"/>
<dbReference type="GeneID" id="20535"/>
<dbReference type="KEGG" id="mmu:20535"/>
<dbReference type="UCSC" id="uc008wrm.2">
    <molecule id="P13808-1"/>
    <property type="organism name" value="mouse"/>
</dbReference>
<dbReference type="AGR" id="MGI:109351"/>
<dbReference type="CTD" id="6522"/>
<dbReference type="MGI" id="MGI:109351">
    <property type="gene designation" value="Slc4a2"/>
</dbReference>
<dbReference type="eggNOG" id="KOG1172">
    <property type="taxonomic scope" value="Eukaryota"/>
</dbReference>
<dbReference type="InParanoid" id="P13808"/>
<dbReference type="OrthoDB" id="1735926at2759"/>
<dbReference type="PhylomeDB" id="P13808"/>
<dbReference type="TreeFam" id="TF313630"/>
<dbReference type="Reactome" id="R-MMU-425381">
    <property type="pathway name" value="Bicarbonate transporters"/>
</dbReference>
<dbReference type="BioGRID-ORCS" id="20535">
    <property type="hits" value="2 hits in 76 CRISPR screens"/>
</dbReference>
<dbReference type="ChiTaRS" id="Slc4a2">
    <property type="organism name" value="mouse"/>
</dbReference>
<dbReference type="PRO" id="PR:P13808"/>
<dbReference type="Proteomes" id="UP000000589">
    <property type="component" value="Unplaced"/>
</dbReference>
<dbReference type="RNAct" id="P13808">
    <property type="molecule type" value="protein"/>
</dbReference>
<dbReference type="GO" id="GO:0016324">
    <property type="term" value="C:apical plasma membrane"/>
    <property type="evidence" value="ECO:0007669"/>
    <property type="project" value="UniProtKB-SubCell"/>
</dbReference>
<dbReference type="GO" id="GO:0016323">
    <property type="term" value="C:basolateral plasma membrane"/>
    <property type="evidence" value="ECO:0000314"/>
    <property type="project" value="UniProtKB"/>
</dbReference>
<dbReference type="GO" id="GO:0016020">
    <property type="term" value="C:membrane"/>
    <property type="evidence" value="ECO:0000314"/>
    <property type="project" value="UniProtKB"/>
</dbReference>
<dbReference type="GO" id="GO:0022853">
    <property type="term" value="F:active monoatomic ion transmembrane transporter activity"/>
    <property type="evidence" value="ECO:0007669"/>
    <property type="project" value="UniProtKB-ARBA"/>
</dbReference>
<dbReference type="GO" id="GO:0015108">
    <property type="term" value="F:chloride transmembrane transporter activity"/>
    <property type="evidence" value="ECO:0000314"/>
    <property type="project" value="UniProtKB"/>
</dbReference>
<dbReference type="GO" id="GO:0140900">
    <property type="term" value="F:chloride:bicarbonate antiporter activity"/>
    <property type="evidence" value="ECO:0000314"/>
    <property type="project" value="UniProtKB"/>
</dbReference>
<dbReference type="GO" id="GO:0097186">
    <property type="term" value="P:amelogenesis"/>
    <property type="evidence" value="ECO:0000314"/>
    <property type="project" value="ARUK-UCL"/>
</dbReference>
<dbReference type="GO" id="GO:0006821">
    <property type="term" value="P:chloride transport"/>
    <property type="evidence" value="ECO:0000314"/>
    <property type="project" value="UniProtKB"/>
</dbReference>
<dbReference type="GO" id="GO:0043377">
    <property type="term" value="P:negative regulation of CD8-positive, alpha-beta T cell differentiation"/>
    <property type="evidence" value="ECO:0000315"/>
    <property type="project" value="UniProtKB"/>
</dbReference>
<dbReference type="GO" id="GO:2000565">
    <property type="term" value="P:negative regulation of CD8-positive, alpha-beta T cell proliferation"/>
    <property type="evidence" value="ECO:0000315"/>
    <property type="project" value="UniProtKB"/>
</dbReference>
<dbReference type="GO" id="GO:0030316">
    <property type="term" value="P:osteoclast differentiation"/>
    <property type="evidence" value="ECO:0000315"/>
    <property type="project" value="UniProtKB"/>
</dbReference>
<dbReference type="GO" id="GO:0070175">
    <property type="term" value="P:positive regulation of enamel mineralization"/>
    <property type="evidence" value="ECO:0000314"/>
    <property type="project" value="ARUK-UCL"/>
</dbReference>
<dbReference type="GO" id="GO:0032956">
    <property type="term" value="P:regulation of actin cytoskeleton organization"/>
    <property type="evidence" value="ECO:0000315"/>
    <property type="project" value="UniProtKB"/>
</dbReference>
<dbReference type="GO" id="GO:0045124">
    <property type="term" value="P:regulation of bone resorption"/>
    <property type="evidence" value="ECO:0000315"/>
    <property type="project" value="UniProtKB"/>
</dbReference>
<dbReference type="GO" id="GO:0007283">
    <property type="term" value="P:spermatogenesis"/>
    <property type="evidence" value="ECO:0000315"/>
    <property type="project" value="UniProtKB"/>
</dbReference>
<dbReference type="FunFam" id="1.10.287.570:FF:000001">
    <property type="entry name" value="Anion exchange protein"/>
    <property type="match status" value="1"/>
</dbReference>
<dbReference type="FunFam" id="3.40.930.10:FF:000004">
    <property type="entry name" value="Anion exchange protein"/>
    <property type="match status" value="1"/>
</dbReference>
<dbReference type="Gene3D" id="1.10.287.570">
    <property type="entry name" value="Helical hairpin bin"/>
    <property type="match status" value="1"/>
</dbReference>
<dbReference type="Gene3D" id="3.40.930.10">
    <property type="entry name" value="Mannitol-specific EII, Chain A"/>
    <property type="match status" value="1"/>
</dbReference>
<dbReference type="InterPro" id="IPR001717">
    <property type="entry name" value="Anion_exchange"/>
</dbReference>
<dbReference type="InterPro" id="IPR002978">
    <property type="entry name" value="Anion_exchange_2"/>
</dbReference>
<dbReference type="InterPro" id="IPR018241">
    <property type="entry name" value="Anion_exchange_CS"/>
</dbReference>
<dbReference type="InterPro" id="IPR013769">
    <property type="entry name" value="Band3_cytoplasmic_dom"/>
</dbReference>
<dbReference type="InterPro" id="IPR011531">
    <property type="entry name" value="HCO3_transpt-like_TM_dom"/>
</dbReference>
<dbReference type="InterPro" id="IPR003020">
    <property type="entry name" value="HCO3_transpt_euk"/>
</dbReference>
<dbReference type="InterPro" id="IPR016152">
    <property type="entry name" value="PTrfase/Anion_transptr"/>
</dbReference>
<dbReference type="NCBIfam" id="TIGR00834">
    <property type="entry name" value="ae"/>
    <property type="match status" value="1"/>
</dbReference>
<dbReference type="PANTHER" id="PTHR11453">
    <property type="entry name" value="ANION EXCHANGE PROTEIN"/>
    <property type="match status" value="1"/>
</dbReference>
<dbReference type="PANTHER" id="PTHR11453:SF14">
    <property type="entry name" value="ANION EXCHANGE PROTEIN 2"/>
    <property type="match status" value="1"/>
</dbReference>
<dbReference type="Pfam" id="PF07565">
    <property type="entry name" value="Band_3_cyto"/>
    <property type="match status" value="1"/>
</dbReference>
<dbReference type="Pfam" id="PF00955">
    <property type="entry name" value="HCO3_cotransp"/>
    <property type="match status" value="1"/>
</dbReference>
<dbReference type="PRINTS" id="PR00165">
    <property type="entry name" value="ANIONEXCHNGR"/>
</dbReference>
<dbReference type="PRINTS" id="PR01188">
    <property type="entry name" value="ANIONEXHNGR2"/>
</dbReference>
<dbReference type="PRINTS" id="PR01231">
    <property type="entry name" value="HCO3TRNSPORT"/>
</dbReference>
<dbReference type="SUPFAM" id="SSF55804">
    <property type="entry name" value="Phoshotransferase/anion transport protein"/>
    <property type="match status" value="1"/>
</dbReference>
<dbReference type="PROSITE" id="PS00219">
    <property type="entry name" value="ANION_EXCHANGER_1"/>
    <property type="match status" value="1"/>
</dbReference>
<dbReference type="PROSITE" id="PS00220">
    <property type="entry name" value="ANION_EXCHANGER_2"/>
    <property type="match status" value="1"/>
</dbReference>
<gene>
    <name type="primary">Slc4a2</name>
    <name type="synonym">Ae2</name>
</gene>
<feature type="chain" id="PRO_0000079216" description="Anion exchange protein 2">
    <location>
        <begin position="1"/>
        <end position="1237"/>
    </location>
</feature>
<feature type="topological domain" description="Cytoplasmic" evidence="3">
    <location>
        <begin position="1"/>
        <end position="703"/>
    </location>
</feature>
<feature type="transmembrane region" description="Helical" evidence="3">
    <location>
        <begin position="704"/>
        <end position="727"/>
    </location>
</feature>
<feature type="transmembrane region" description="Helical" evidence="3">
    <location>
        <begin position="733"/>
        <end position="770"/>
    </location>
</feature>
<feature type="transmembrane region" description="Helical" evidence="3">
    <location>
        <begin position="790"/>
        <end position="812"/>
    </location>
</feature>
<feature type="transmembrane region" description="Helical" evidence="3">
    <location>
        <begin position="822"/>
        <end position="843"/>
    </location>
</feature>
<feature type="topological domain" description="Extracellular" evidence="3">
    <location>
        <begin position="844"/>
        <end position="896"/>
    </location>
</feature>
<feature type="transmembrane region" description="Helical" evidence="3">
    <location>
        <begin position="897"/>
        <end position="914"/>
    </location>
</feature>
<feature type="topological domain" description="Cytoplasmic" evidence="3">
    <location>
        <begin position="915"/>
        <end position="929"/>
    </location>
</feature>
<feature type="transmembrane region" description="Helical" evidence="3">
    <location>
        <begin position="930"/>
        <end position="950"/>
    </location>
</feature>
<feature type="transmembrane region" description="Helical" evidence="3">
    <location>
        <begin position="984"/>
        <end position="1006"/>
    </location>
</feature>
<feature type="transmembrane region" description="Helical" evidence="3">
    <location>
        <begin position="1032"/>
        <end position="1053"/>
    </location>
</feature>
<feature type="transmembrane region" description="Helical" evidence="3">
    <location>
        <begin position="1087"/>
        <end position="1132"/>
    </location>
</feature>
<feature type="transmembrane region" description="Helical" evidence="3">
    <location>
        <begin position="1159"/>
        <end position="1195"/>
    </location>
</feature>
<feature type="region of interest" description="Disordered" evidence="4">
    <location>
        <begin position="1"/>
        <end position="238"/>
    </location>
</feature>
<feature type="region of interest" description="Disordered" evidence="4">
    <location>
        <begin position="285"/>
        <end position="316"/>
    </location>
</feature>
<feature type="region of interest" description="Disordered" evidence="4">
    <location>
        <begin position="445"/>
        <end position="466"/>
    </location>
</feature>
<feature type="region of interest" description="Membrane (anion exchange)">
    <location>
        <begin position="704"/>
        <end position="1237"/>
    </location>
</feature>
<feature type="compositionally biased region" description="Basic and acidic residues" evidence="4">
    <location>
        <begin position="38"/>
        <end position="48"/>
    </location>
</feature>
<feature type="compositionally biased region" description="Basic and acidic residues" evidence="4">
    <location>
        <begin position="57"/>
        <end position="74"/>
    </location>
</feature>
<feature type="compositionally biased region" description="Basic residues" evidence="4">
    <location>
        <begin position="75"/>
        <end position="84"/>
    </location>
</feature>
<feature type="compositionally biased region" description="Basic residues" evidence="4">
    <location>
        <begin position="93"/>
        <end position="109"/>
    </location>
</feature>
<feature type="compositionally biased region" description="Acidic residues" evidence="4">
    <location>
        <begin position="119"/>
        <end position="132"/>
    </location>
</feature>
<feature type="modified residue" description="Phosphoserine" evidence="2">
    <location>
        <position position="112"/>
    </location>
</feature>
<feature type="modified residue" description="Phosphoserine" evidence="2">
    <location>
        <position position="131"/>
    </location>
</feature>
<feature type="modified residue" description="Phosphoserine" evidence="13">
    <location>
        <position position="144"/>
    </location>
</feature>
<feature type="modified residue" description="Phosphoserine" evidence="13">
    <location>
        <position position="170"/>
    </location>
</feature>
<feature type="modified residue" description="Phosphoserine" evidence="13">
    <location>
        <position position="172"/>
    </location>
</feature>
<feature type="modified residue" description="Phosphoserine" evidence="2">
    <location>
        <position position="239"/>
    </location>
</feature>
<feature type="modified residue" description="Phosphothreonine" evidence="13">
    <location>
        <position position="253"/>
    </location>
</feature>
<feature type="modified residue" description="N6-methyllysine" evidence="2">
    <location>
        <position position="270"/>
    </location>
</feature>
<feature type="modified residue" description="Phosphoserine" evidence="2">
    <location>
        <position position="439"/>
    </location>
</feature>
<feature type="lipid moiety-binding region" description="S-palmitoyl cysteine" evidence="1">
    <location>
        <position position="1169"/>
    </location>
</feature>
<feature type="glycosylation site" description="N-linked (GlcNAc...) asparagine" evidence="3">
    <location>
        <position position="855"/>
    </location>
</feature>
<feature type="glycosylation site" description="N-linked (GlcNAc...) asparagine" evidence="3">
    <location>
        <position position="866"/>
    </location>
</feature>
<feature type="glycosylation site" description="N-linked (GlcNAc...) asparagine" evidence="3">
    <location>
        <position position="878"/>
    </location>
</feature>
<feature type="splice variant" id="VSP_000460" description="In isoform C1." evidence="12">
    <location>
        <begin position="1"/>
        <end position="198"/>
    </location>
</feature>
<feature type="splice variant" id="VSP_000459" description="In isoform C2." evidence="12">
    <location>
        <begin position="1"/>
        <end position="166"/>
    </location>
</feature>
<feature type="splice variant" id="VSP_000458" description="In isoform B1." evidence="12">
    <original>MSSAPRRPASGADSLHT</original>
    <variation>MTQ</variation>
    <location>
        <begin position="1"/>
        <end position="17"/>
    </location>
</feature>
<feature type="splice variant" id="VSP_000457" description="In isoform B2." evidence="12">
    <original>MSSAPRRPASGADSLHT</original>
    <variation>MDFLLRPQ</variation>
    <location>
        <begin position="1"/>
        <end position="17"/>
    </location>
</feature>
<feature type="splice variant" id="VSP_000461" description="In isoform C2." evidence="12">
    <original>ERTSPSPPTQTPHQEAAPRASKGAQTG</original>
    <variation>MPAFQEWKSGGLREEAVFGAHGCSVCR</variation>
    <location>
        <begin position="167"/>
        <end position="193"/>
    </location>
</feature>
<feature type="mutagenesis site" description="Loss of activity but no effect on localization to basolateral cell membrane." evidence="9">
    <original>R</original>
    <variation>A</variation>
    <location>
        <position position="1056"/>
    </location>
</feature>
<feature type="sequence conflict" description="In Ref. 2; AAG23154/AAG23155/AAG23156/AAG23158/AAG23157." evidence="12" ref="2">
    <original>A</original>
    <variation>G</variation>
    <location>
        <position position="205"/>
    </location>
</feature>
<evidence type="ECO:0000250" key="1"/>
<evidence type="ECO:0000250" key="2">
    <source>
        <dbReference type="UniProtKB" id="P04920"/>
    </source>
</evidence>
<evidence type="ECO:0000255" key="3"/>
<evidence type="ECO:0000256" key="4">
    <source>
        <dbReference type="SAM" id="MobiDB-lite"/>
    </source>
</evidence>
<evidence type="ECO:0000269" key="5">
    <source>
    </source>
</evidence>
<evidence type="ECO:0000269" key="6">
    <source>
    </source>
</evidence>
<evidence type="ECO:0000269" key="7">
    <source>
    </source>
</evidence>
<evidence type="ECO:0000269" key="8">
    <source>
    </source>
</evidence>
<evidence type="ECO:0000269" key="9">
    <source>
    </source>
</evidence>
<evidence type="ECO:0000269" key="10">
    <source>
    </source>
</evidence>
<evidence type="ECO:0000269" key="11">
    <source>
    </source>
</evidence>
<evidence type="ECO:0000305" key="12"/>
<evidence type="ECO:0007744" key="13">
    <source>
    </source>
</evidence>
<proteinExistence type="evidence at protein level"/>
<comment type="function">
    <text evidence="6 8 9 10 11">Sodium-independent anion exchanger which mediates the electroneutral exchange of chloride for bicarbonate ions across the cell membrane (PubMed:12958022, PubMed:18971331, PubMed:23341620, PubMed:2371270, PubMed:24515893). Plays an important role in osteoclast differentiation and function (PubMed:18971331, PubMed:23341620). Regulates bone resorption and calpain-dependent actin cytoskeleton organization in osteoclasts via anion exchange-dependent control of pH (PubMed:23341620). Essential for intracellular pH regulation in CD8(+) T-cells upon CD3 stimulation, modulating CD8(+) T-cell responses (PubMed:24515893).</text>
</comment>
<comment type="function">
    <molecule>Isoform A</molecule>
    <text evidence="7">Plays a critical role in male fertility and spermiogenesis.</text>
</comment>
<comment type="function">
    <molecule>Isoform B1</molecule>
    <text evidence="7">Plays a critical role in male fertility and spermiogenesis.</text>
</comment>
<comment type="function">
    <molecule>Isoform B2</molecule>
    <text evidence="7">Plays a critical role in male fertility and spermiogenesis.</text>
</comment>
<comment type="catalytic activity">
    <reaction evidence="6 9 10 11">
        <text>hydrogencarbonate(in) + chloride(out) = hydrogencarbonate(out) + chloride(in)</text>
        <dbReference type="Rhea" id="RHEA:72363"/>
        <dbReference type="ChEBI" id="CHEBI:17544"/>
        <dbReference type="ChEBI" id="CHEBI:17996"/>
    </reaction>
</comment>
<comment type="activity regulation">
    <text evidence="6 10">Inhibited by 4,4'-diisothiocyanatostilbene-2,2'-disulfonic acid (DIDS) and acetazolamide (PubMed:12958022, PubMed:2371270). Muscarinic receptor stimulation enhances activity through a Ca(2+)-dependent mechanism (PubMed:12958022).</text>
</comment>
<comment type="subcellular location">
    <subcellularLocation>
        <location evidence="2">Apical cell membrane</location>
        <topology evidence="3">Multi-pass membrane protein</topology>
    </subcellularLocation>
    <subcellularLocation>
        <location evidence="6 8 9 10">Basolateral cell membrane</location>
        <topology evidence="3">Multi-pass membrane protein</topology>
    </subcellularLocation>
</comment>
<comment type="alternative products">
    <event type="alternative splicing"/>
    <isoform>
        <id>P13808-1</id>
        <name>A</name>
        <sequence type="displayed"/>
    </isoform>
    <isoform>
        <id>P13808-2</id>
        <name>B1</name>
        <sequence type="described" ref="VSP_000458"/>
    </isoform>
    <isoform>
        <id>P13808-3</id>
        <name>B2</name>
        <sequence type="described" ref="VSP_000457"/>
    </isoform>
    <isoform>
        <id>P13808-4</id>
        <name>C1</name>
        <sequence type="described" ref="VSP_000460"/>
    </isoform>
    <isoform>
        <id>P13808-5</id>
        <name>C2</name>
        <sequence type="described" ref="VSP_000459 VSP_000461"/>
    </isoform>
</comment>
<comment type="tissue specificity">
    <text evidence="6 10">Expressed in the choroid plexus epithelium (at protein level) (PubMed:2371270). Expressed in the parotid gland and sublingual salivary gland acinar cells (at protein level) (PubMed:12958022).</text>
</comment>
<comment type="tissue specificity">
    <molecule>Isoform A</molecule>
    <text evidence="5 7">Widely expressed at similar levels in all tissues examined (PubMed:11006093). Expressed in the testis (PubMed:14673081).</text>
</comment>
<comment type="tissue specificity">
    <molecule>Isoform B1</molecule>
    <text evidence="5 7">Predominantly expressed in stomach although they are also detected at lower levels in other tissues (PubMed:11006093). Expressed in the testis (PubMed:14673081).</text>
</comment>
<comment type="tissue specificity">
    <molecule>Isoform B2</molecule>
    <text evidence="5 7">Predominantly expressed in stomach although they are also detected at lower levels in other tissues (PubMed:11006093). Expressed in the testis (PubMed:14673081).</text>
</comment>
<comment type="tissue specificity">
    <molecule>Isoform C1</molecule>
    <text evidence="5">Stomach-specific.</text>
</comment>
<comment type="tissue specificity">
    <molecule>Isoform C2</molecule>
    <text evidence="5">Expressed at slightly higher levels in lung and stomach than in other tissues.</text>
</comment>
<comment type="induction">
    <text evidence="8">Up-regulated during osteoclast differentiation.</text>
</comment>
<comment type="disruption phenotype">
    <text evidence="7 8 9 11">Male mice are infertile and the size and weight of the testis is reduced by 40-60%. Spermiogenesis is interrupted after stage VII, with only a few late spermatids and a complete absence of spermatozoa in the seminiferous tubules. The number of apoptotic bodies is increased in the seminiferous tubules and in the epididymis, which also shows squamous metaplasia of the epididymal epithelium (PubMed:14673081). CD8(+) T-cells exhibit increased intracellular pH and enhanced cell proliferation and activation after CD3 stimulation (PubMed:24515893). Mice display osteopetrosis with osteoclasts showing abnormal differentiation and increased apoptosis (PubMed:18971331). Conditional knockout in osteoclasts (OCs) result in dysfunctional OCs which exhibit altered intracellular pH and actin cytoskeletal dynamics and an impaired bone resorption capacity owing to a dysregulation of calpain-dependent podosomal disassembly (PubMed:23341620).</text>
</comment>
<comment type="similarity">
    <text evidence="12">Belongs to the anion exchanger (TC 2.A.31) family.</text>
</comment>
<protein>
    <recommendedName>
        <fullName>Anion exchange protein 2</fullName>
        <shortName>AE 2</shortName>
        <shortName>Anion exchanger 2</shortName>
    </recommendedName>
    <alternativeName>
        <fullName>Band 3-related protein</fullName>
        <shortName>B3RP</shortName>
    </alternativeName>
    <alternativeName>
        <fullName>Non-erythroid band 3-like protein</fullName>
    </alternativeName>
    <alternativeName>
        <fullName>Solute carrier family 4 member 2</fullName>
    </alternativeName>
</protein>
<accession>P13808</accession>
<accession>Q9ES09</accession>
<accession>Q9ES10</accession>
<accession>Q9ES11</accession>
<accession>Q9ES12</accession>
<accession>Q9ES13</accession>
<name>B3A2_MOUSE</name>
<keyword id="KW-0025">Alternative splicing</keyword>
<keyword id="KW-0039">Anion exchange</keyword>
<keyword id="KW-0050">Antiport</keyword>
<keyword id="KW-1003">Cell membrane</keyword>
<keyword id="KW-0221">Differentiation</keyword>
<keyword id="KW-0325">Glycoprotein</keyword>
<keyword id="KW-0406">Ion transport</keyword>
<keyword id="KW-0449">Lipoprotein</keyword>
<keyword id="KW-0472">Membrane</keyword>
<keyword id="KW-0488">Methylation</keyword>
<keyword id="KW-0564">Palmitate</keyword>
<keyword id="KW-0597">Phosphoprotein</keyword>
<keyword id="KW-1185">Reference proteome</keyword>
<keyword id="KW-0744">Spermatogenesis</keyword>
<keyword id="KW-0812">Transmembrane</keyword>
<keyword id="KW-1133">Transmembrane helix</keyword>
<keyword id="KW-0813">Transport</keyword>
<sequence length="1237" mass="136814">MSSAPRRPASGADSLHTPEPESLSPGTPGFPEQEEDELRTLGVERFEEILQEAGSRGGEEPGRSYGEEDFEYHRQSSHHIHHPLSTHLPPDARRRKTPQGPGRKPRRRPGASPTGETPTIEEGEEDEEEASEAEGFRAPPQQPSPATTPSAVQFFLQEDEGAERKPERTSPSPPTQTPHQEAAPRASKGAQTGTLVEEMVAVASATAGGDDGGAAGRPLTKAQPGHRSYNLQERRRIGSMTGVEQALLPRVPTDESEAQTLATADLDLMKSHRFEDVPGVRRHLVRKNAKGSTQAAREGREPGPTPRARPRAPHKPHEVFVELNELLLDKNQEPQWRETARWIKFEEDVEEETERWGKPHVASLSFRSLLELRRTLAHGAVLLDLDQQTLPGVAHQVVEQMVISDQIKAEDRANVLRALLLKHSHPSDEKEFSFPRNISAGSLGSLLGHHHAQGTESDPHVTEPLIGGVPETRLEVDRERELPPPAPPAGITRSKSKHELKLLEKIPENAEATVVLVGCVEFLSRPTMAFVRLREAVELDAVLEVPVPVRFLFLLLGPSSANMDYHEIGRSISTLMSDKQFHEAAYLADERDDLLTAINAFLDCSVVLPPSEVQGEELLRSVAHFQRQMLKKREEQGRLLPPGAGLEPKSAQDKALLQMVEVAGAAEDDPLRRTGRPFGGLIRDVRRRYPHYLSDFRDALDPQCLAAVIFIYFAALSPAITFGGLLGEKTKDLIGVSELIMSTALQGVVFCLLGAQPLLVIGFSGPLLVFEEAFFSFCSSNELEYLVGRVWIGFWLVFLALLMVALEGSFLVRFVSRFTQEIFAFLISLIFIYETFYKLIKIFQEHPLHGCSGSNDSEAGSSSSSNMTWATTILVPDNSSASGQSGQEKPRGQPNTALLSLVLMAGTFFIAFFLRKFKNSRFFPGRIRRVIGDFGVPIAILIMVLVDYSIEDTYTQKLSVPSGFSVTAPDKRGWVINPLGEKTPFPVWMMVASLLPAVLVFILIFMETQITTLIISKKERMLQKGSGFHLDLLLIVAMGGICALFGLPWLAAATVRSVTHANALTVMSKAVAPGDKPKIQEVKEQRVTGLLVALLVGLSMVIGDLLRQIPLAVLFGIFLYMGVTSLNGIQFYERLHLLLMPPKHHPDVTYVKKVRTMRMHLFTALQLLCLALLWAVMSTAASLAFPFILILTVPLRMVVLTRIFTEREMKCLDANEAEPVFDECEGVDEYNEMPMPV</sequence>
<organism>
    <name type="scientific">Mus musculus</name>
    <name type="common">Mouse</name>
    <dbReference type="NCBI Taxonomy" id="10090"/>
    <lineage>
        <taxon>Eukaryota</taxon>
        <taxon>Metazoa</taxon>
        <taxon>Chordata</taxon>
        <taxon>Craniata</taxon>
        <taxon>Vertebrata</taxon>
        <taxon>Euteleostomi</taxon>
        <taxon>Mammalia</taxon>
        <taxon>Eutheria</taxon>
        <taxon>Euarchontoglires</taxon>
        <taxon>Glires</taxon>
        <taxon>Rodentia</taxon>
        <taxon>Myomorpha</taxon>
        <taxon>Muroidea</taxon>
        <taxon>Muridae</taxon>
        <taxon>Murinae</taxon>
        <taxon>Mus</taxon>
        <taxon>Mus</taxon>
    </lineage>
</organism>